<gene>
    <name evidence="1" type="primary">kdpC</name>
    <name type="ordered locus">SAR2163</name>
</gene>
<dbReference type="EMBL" id="BX571856">
    <property type="protein sequence ID" value="CAG41144.1"/>
    <property type="molecule type" value="Genomic_DNA"/>
</dbReference>
<dbReference type="RefSeq" id="WP_001092414.1">
    <property type="nucleotide sequence ID" value="NC_002952.2"/>
</dbReference>
<dbReference type="SMR" id="Q6GEZ8"/>
<dbReference type="KEGG" id="sar:SAR2163"/>
<dbReference type="HOGENOM" id="CLU_077094_2_0_9"/>
<dbReference type="Proteomes" id="UP000000596">
    <property type="component" value="Chromosome"/>
</dbReference>
<dbReference type="GO" id="GO:0005886">
    <property type="term" value="C:plasma membrane"/>
    <property type="evidence" value="ECO:0007669"/>
    <property type="project" value="UniProtKB-SubCell"/>
</dbReference>
<dbReference type="GO" id="GO:0005524">
    <property type="term" value="F:ATP binding"/>
    <property type="evidence" value="ECO:0007669"/>
    <property type="project" value="UniProtKB-UniRule"/>
</dbReference>
<dbReference type="GO" id="GO:0008556">
    <property type="term" value="F:P-type potassium transmembrane transporter activity"/>
    <property type="evidence" value="ECO:0007669"/>
    <property type="project" value="InterPro"/>
</dbReference>
<dbReference type="HAMAP" id="MF_00276">
    <property type="entry name" value="KdpC"/>
    <property type="match status" value="1"/>
</dbReference>
<dbReference type="InterPro" id="IPR003820">
    <property type="entry name" value="KdpC"/>
</dbReference>
<dbReference type="NCBIfam" id="TIGR00681">
    <property type="entry name" value="kdpC"/>
    <property type="match status" value="1"/>
</dbReference>
<dbReference type="NCBIfam" id="NF001454">
    <property type="entry name" value="PRK00315.1"/>
    <property type="match status" value="1"/>
</dbReference>
<dbReference type="NCBIfam" id="NF010602">
    <property type="entry name" value="PRK13998.1"/>
    <property type="match status" value="1"/>
</dbReference>
<dbReference type="PANTHER" id="PTHR30042">
    <property type="entry name" value="POTASSIUM-TRANSPORTING ATPASE C CHAIN"/>
    <property type="match status" value="1"/>
</dbReference>
<dbReference type="PANTHER" id="PTHR30042:SF2">
    <property type="entry name" value="POTASSIUM-TRANSPORTING ATPASE KDPC SUBUNIT"/>
    <property type="match status" value="1"/>
</dbReference>
<dbReference type="Pfam" id="PF02669">
    <property type="entry name" value="KdpC"/>
    <property type="match status" value="1"/>
</dbReference>
<dbReference type="PIRSF" id="PIRSF001296">
    <property type="entry name" value="K_ATPase_KdpC"/>
    <property type="match status" value="1"/>
</dbReference>
<feature type="chain" id="PRO_0000197011" description="Potassium-transporting ATPase KdpC subunit">
    <location>
        <begin position="1"/>
        <end position="186"/>
    </location>
</feature>
<feature type="transmembrane region" description="Helical" evidence="1">
    <location>
        <begin position="10"/>
        <end position="30"/>
    </location>
</feature>
<reference key="1">
    <citation type="journal article" date="2004" name="Proc. Natl. Acad. Sci. U.S.A.">
        <title>Complete genomes of two clinical Staphylococcus aureus strains: evidence for the rapid evolution of virulence and drug resistance.</title>
        <authorList>
            <person name="Holden M.T.G."/>
            <person name="Feil E.J."/>
            <person name="Lindsay J.A."/>
            <person name="Peacock S.J."/>
            <person name="Day N.P.J."/>
            <person name="Enright M.C."/>
            <person name="Foster T.J."/>
            <person name="Moore C.E."/>
            <person name="Hurst L."/>
            <person name="Atkin R."/>
            <person name="Barron A."/>
            <person name="Bason N."/>
            <person name="Bentley S.D."/>
            <person name="Chillingworth C."/>
            <person name="Chillingworth T."/>
            <person name="Churcher C."/>
            <person name="Clark L."/>
            <person name="Corton C."/>
            <person name="Cronin A."/>
            <person name="Doggett J."/>
            <person name="Dowd L."/>
            <person name="Feltwell T."/>
            <person name="Hance Z."/>
            <person name="Harris B."/>
            <person name="Hauser H."/>
            <person name="Holroyd S."/>
            <person name="Jagels K."/>
            <person name="James K.D."/>
            <person name="Lennard N."/>
            <person name="Line A."/>
            <person name="Mayes R."/>
            <person name="Moule S."/>
            <person name="Mungall K."/>
            <person name="Ormond D."/>
            <person name="Quail M.A."/>
            <person name="Rabbinowitsch E."/>
            <person name="Rutherford K.M."/>
            <person name="Sanders M."/>
            <person name="Sharp S."/>
            <person name="Simmonds M."/>
            <person name="Stevens K."/>
            <person name="Whitehead S."/>
            <person name="Barrell B.G."/>
            <person name="Spratt B.G."/>
            <person name="Parkhill J."/>
        </authorList>
    </citation>
    <scope>NUCLEOTIDE SEQUENCE [LARGE SCALE GENOMIC DNA]</scope>
    <source>
        <strain>MRSA252</strain>
    </source>
</reference>
<comment type="function">
    <text evidence="1">Part of the high-affinity ATP-driven potassium transport (or Kdp) system, which catalyzes the hydrolysis of ATP coupled with the electrogenic transport of potassium into the cytoplasm. This subunit acts as a catalytic chaperone that increases the ATP-binding affinity of the ATP-hydrolyzing subunit KdpB by the formation of a transient KdpB/KdpC/ATP ternary complex.</text>
</comment>
<comment type="subunit">
    <text evidence="1">The system is composed of three essential subunits: KdpA, KdpB and KdpC.</text>
</comment>
<comment type="subcellular location">
    <subcellularLocation>
        <location evidence="1">Cell membrane</location>
        <topology evidence="1">Single-pass membrane protein</topology>
    </subcellularLocation>
</comment>
<comment type="similarity">
    <text evidence="1">Belongs to the KdpC family.</text>
</comment>
<evidence type="ECO:0000255" key="1">
    <source>
        <dbReference type="HAMAP-Rule" id="MF_00276"/>
    </source>
</evidence>
<sequence>MNTIRNSICLTIITMVLCGFLFPLAITLIGQIFFYQQANGSLITYDNRIVGSKLIGQHWTETRYFHGRPSAVDYNMNPEKLYKNGVSSGGSNESNGNTELIARVKHHVKFDNSNVTIDAATSSGSGLDPHITVENALKQAPRIADARHISTSRVADLIQHRKQRGVLTNDYVNVLELNIALDKMKD</sequence>
<protein>
    <recommendedName>
        <fullName evidence="1">Potassium-transporting ATPase KdpC subunit</fullName>
    </recommendedName>
    <alternativeName>
        <fullName evidence="1">ATP phosphohydrolase [potassium-transporting] C chain</fullName>
    </alternativeName>
    <alternativeName>
        <fullName evidence="1">Potassium-binding and translocating subunit C</fullName>
    </alternativeName>
    <alternativeName>
        <fullName evidence="1">Potassium-translocating ATPase C chain</fullName>
    </alternativeName>
</protein>
<name>KDPC_STAAR</name>
<keyword id="KW-0067">ATP-binding</keyword>
<keyword id="KW-1003">Cell membrane</keyword>
<keyword id="KW-0406">Ion transport</keyword>
<keyword id="KW-0472">Membrane</keyword>
<keyword id="KW-0547">Nucleotide-binding</keyword>
<keyword id="KW-0630">Potassium</keyword>
<keyword id="KW-0633">Potassium transport</keyword>
<keyword id="KW-0812">Transmembrane</keyword>
<keyword id="KW-1133">Transmembrane helix</keyword>
<keyword id="KW-0813">Transport</keyword>
<accession>Q6GEZ8</accession>
<proteinExistence type="inferred from homology"/>
<organism>
    <name type="scientific">Staphylococcus aureus (strain MRSA252)</name>
    <dbReference type="NCBI Taxonomy" id="282458"/>
    <lineage>
        <taxon>Bacteria</taxon>
        <taxon>Bacillati</taxon>
        <taxon>Bacillota</taxon>
        <taxon>Bacilli</taxon>
        <taxon>Bacillales</taxon>
        <taxon>Staphylococcaceae</taxon>
        <taxon>Staphylococcus</taxon>
    </lineage>
</organism>